<proteinExistence type="inferred from homology"/>
<protein>
    <recommendedName>
        <fullName evidence="5">Peroxisome assembly protein 12</fullName>
    </recommendedName>
    <alternativeName>
        <fullName>Peroxin-12</fullName>
    </alternativeName>
</protein>
<keyword id="KW-0472">Membrane</keyword>
<keyword id="KW-0479">Metal-binding</keyword>
<keyword id="KW-0576">Peroxisome</keyword>
<keyword id="KW-0653">Protein transport</keyword>
<keyword id="KW-1185">Reference proteome</keyword>
<keyword id="KW-0812">Transmembrane</keyword>
<keyword id="KW-1133">Transmembrane helix</keyword>
<keyword id="KW-0813">Transport</keyword>
<keyword id="KW-0862">Zinc</keyword>
<keyword id="KW-0863">Zinc-finger</keyword>
<sequence>MSTTIRASQLASSISPKTEEKQPSVFDIIAQENLATSIRPALQHLVKYLAFFKPKTFLSVHRNFDEYYIIFDLILQNHYLRNYGASFTENFYSMKRIASGTGNPPNDGRERIMSLITLVGWPYVENKLNQLYDRLKEVYECRSWSSINGMKAKCQKMFVIIWPYIKTALKAVKSALQLAYILNRSSIHSPWLYFSGVILKHLTPEDLEAFNAVPLHLQTGYQISRGTLNEHIHLRFFNRIWRFILGLPGIVSRLFAYGLFFVQFLDYMYNTDLAKLTKTGLDGAIPSPPHKMIISESEILSLDTNKCPICLKKRVNDTALFVSGYVFCYTCINQYVNTYNKCPVTGCPANVQHLIRLFV</sequence>
<feature type="chain" id="PRO_0000218613" description="Peroxisome assembly protein 12">
    <location>
        <begin position="1"/>
        <end position="359"/>
    </location>
</feature>
<feature type="topological domain" description="Peroxisomal matrix" evidence="1">
    <location>
        <begin position="1"/>
        <end position="24"/>
    </location>
</feature>
<feature type="transmembrane region" description="Helical; Name=TM1" evidence="1">
    <location>
        <begin position="25"/>
        <end position="52"/>
    </location>
</feature>
<feature type="topological domain" description="Cytoplasmic" evidence="1">
    <location>
        <begin position="53"/>
        <end position="56"/>
    </location>
</feature>
<feature type="transmembrane region" description="Helical; Name=TM2" evidence="1">
    <location>
        <begin position="57"/>
        <end position="81"/>
    </location>
</feature>
<feature type="topological domain" description="Peroxisomal matrix" evidence="1">
    <location>
        <begin position="82"/>
        <end position="106"/>
    </location>
</feature>
<feature type="transmembrane region" description="Helical; Name=TM3" evidence="1">
    <location>
        <begin position="107"/>
        <end position="128"/>
    </location>
</feature>
<feature type="topological domain" description="Cytoplasmic" evidence="1">
    <location>
        <begin position="129"/>
        <end position="133"/>
    </location>
</feature>
<feature type="transmembrane region" description="Helical; Name=TM4" evidence="1">
    <location>
        <begin position="134"/>
        <end position="184"/>
    </location>
</feature>
<feature type="topological domain" description="Peroxisomal matrix" evidence="1">
    <location>
        <begin position="185"/>
        <end position="253"/>
    </location>
</feature>
<feature type="transmembrane region" description="Helical; Name=TM5" evidence="1">
    <location>
        <begin position="254"/>
        <end position="281"/>
    </location>
</feature>
<feature type="topological domain" description="Cytoplasmic" evidence="1">
    <location>
        <begin position="282"/>
        <end position="359"/>
    </location>
</feature>
<feature type="zinc finger region" description="RING-type; degenerate">
    <location>
        <begin position="307"/>
        <end position="346"/>
    </location>
</feature>
<feature type="binding site" evidence="1">
    <location>
        <position position="307"/>
    </location>
    <ligand>
        <name>Zn(2+)</name>
        <dbReference type="ChEBI" id="CHEBI:29105"/>
    </ligand>
</feature>
<feature type="binding site" evidence="1">
    <location>
        <position position="310"/>
    </location>
    <ligand>
        <name>Zn(2+)</name>
        <dbReference type="ChEBI" id="CHEBI:29105"/>
    </ligand>
</feature>
<feature type="binding site" evidence="1">
    <location>
        <position position="328"/>
    </location>
    <ligand>
        <name>Zn(2+)</name>
        <dbReference type="ChEBI" id="CHEBI:29105"/>
    </ligand>
</feature>
<feature type="binding site" evidence="1">
    <location>
        <position position="331"/>
    </location>
    <ligand>
        <name>Zn(2+)</name>
        <dbReference type="ChEBI" id="CHEBI:29105"/>
    </ligand>
</feature>
<dbReference type="EMBL" id="Z68104">
    <property type="protein sequence ID" value="CAA92113.1"/>
    <property type="molecule type" value="Genomic_DNA"/>
</dbReference>
<dbReference type="PIR" id="T20575">
    <property type="entry name" value="T20575"/>
</dbReference>
<dbReference type="RefSeq" id="NP_001309444.1">
    <property type="nucleotide sequence ID" value="NM_001322631.1"/>
</dbReference>
<dbReference type="SMR" id="Q19189"/>
<dbReference type="BioGRID" id="46240">
    <property type="interactions" value="13"/>
</dbReference>
<dbReference type="DIP" id="DIP-25513N"/>
<dbReference type="FunCoup" id="Q19189">
    <property type="interactions" value="2072"/>
</dbReference>
<dbReference type="STRING" id="6239.F08B12.2.1"/>
<dbReference type="PaxDb" id="6239-F08B12.2"/>
<dbReference type="PeptideAtlas" id="Q19189"/>
<dbReference type="EnsemblMetazoa" id="F08B12.2.1">
    <property type="protein sequence ID" value="F08B12.2.1"/>
    <property type="gene ID" value="WBGene00004197"/>
</dbReference>
<dbReference type="GeneID" id="181331"/>
<dbReference type="KEGG" id="cel:CELE_F08B12.2"/>
<dbReference type="UCSC" id="F08B12.2">
    <property type="organism name" value="c. elegans"/>
</dbReference>
<dbReference type="AGR" id="WB:WBGene00004197"/>
<dbReference type="CTD" id="181331"/>
<dbReference type="WormBase" id="F08B12.2">
    <property type="protein sequence ID" value="CE51466"/>
    <property type="gene ID" value="WBGene00004197"/>
    <property type="gene designation" value="prx-12"/>
</dbReference>
<dbReference type="eggNOG" id="KOG0826">
    <property type="taxonomic scope" value="Eukaryota"/>
</dbReference>
<dbReference type="GeneTree" id="ENSGT00390000016209"/>
<dbReference type="HOGENOM" id="CLU_031067_1_0_1"/>
<dbReference type="InParanoid" id="Q19189"/>
<dbReference type="OMA" id="QHYLARC"/>
<dbReference type="OrthoDB" id="107372at2759"/>
<dbReference type="PhylomeDB" id="Q19189"/>
<dbReference type="Reactome" id="R-CEL-8866654">
    <property type="pathway name" value="E3 ubiquitin ligases ubiquitinate target proteins"/>
</dbReference>
<dbReference type="Reactome" id="R-CEL-9033241">
    <property type="pathway name" value="Peroxisomal protein import"/>
</dbReference>
<dbReference type="Reactome" id="R-CEL-9603798">
    <property type="pathway name" value="Class I peroxisomal membrane protein import"/>
</dbReference>
<dbReference type="UniPathway" id="UPA00143"/>
<dbReference type="PRO" id="PR:Q19189"/>
<dbReference type="Proteomes" id="UP000001940">
    <property type="component" value="Chromosome X"/>
</dbReference>
<dbReference type="Bgee" id="WBGene00004197">
    <property type="expression patterns" value="Expressed in embryo and 3 other cell types or tissues"/>
</dbReference>
<dbReference type="GO" id="GO:1990429">
    <property type="term" value="C:peroxisomal importomer complex"/>
    <property type="evidence" value="ECO:0000318"/>
    <property type="project" value="GO_Central"/>
</dbReference>
<dbReference type="GO" id="GO:0005778">
    <property type="term" value="C:peroxisomal membrane"/>
    <property type="evidence" value="ECO:0000318"/>
    <property type="project" value="GO_Central"/>
</dbReference>
<dbReference type="GO" id="GO:0004842">
    <property type="term" value="F:ubiquitin-protein transferase activity"/>
    <property type="evidence" value="ECO:0000318"/>
    <property type="project" value="GO_Central"/>
</dbReference>
<dbReference type="GO" id="GO:0008270">
    <property type="term" value="F:zinc ion binding"/>
    <property type="evidence" value="ECO:0007669"/>
    <property type="project" value="UniProtKB-KW"/>
</dbReference>
<dbReference type="GO" id="GO:0002119">
    <property type="term" value="P:nematode larval development"/>
    <property type="evidence" value="ECO:0000315"/>
    <property type="project" value="WormBase"/>
</dbReference>
<dbReference type="GO" id="GO:0007031">
    <property type="term" value="P:peroxisome organization"/>
    <property type="evidence" value="ECO:0000315"/>
    <property type="project" value="WormBase"/>
</dbReference>
<dbReference type="GO" id="GO:0016558">
    <property type="term" value="P:protein import into peroxisome matrix"/>
    <property type="evidence" value="ECO:0000318"/>
    <property type="project" value="GO_Central"/>
</dbReference>
<dbReference type="GO" id="GO:0006513">
    <property type="term" value="P:protein monoubiquitination"/>
    <property type="evidence" value="ECO:0000318"/>
    <property type="project" value="GO_Central"/>
</dbReference>
<dbReference type="CDD" id="cd16451">
    <property type="entry name" value="mRING_PEX12"/>
    <property type="match status" value="1"/>
</dbReference>
<dbReference type="FunFam" id="3.30.40.10:FF:000266">
    <property type="entry name" value="Peroxisome assembly protein 12"/>
    <property type="match status" value="1"/>
</dbReference>
<dbReference type="Gene3D" id="3.30.40.10">
    <property type="entry name" value="Zinc/RING finger domain, C3HC4 (zinc finger)"/>
    <property type="match status" value="1"/>
</dbReference>
<dbReference type="InterPro" id="IPR017375">
    <property type="entry name" value="PEX12"/>
</dbReference>
<dbReference type="InterPro" id="IPR006845">
    <property type="entry name" value="Pex_N"/>
</dbReference>
<dbReference type="InterPro" id="IPR001841">
    <property type="entry name" value="Znf_RING"/>
</dbReference>
<dbReference type="InterPro" id="IPR013083">
    <property type="entry name" value="Znf_RING/FYVE/PHD"/>
</dbReference>
<dbReference type="PANTHER" id="PTHR12888:SF0">
    <property type="entry name" value="PEROXISOME ASSEMBLY PROTEIN 12"/>
    <property type="match status" value="1"/>
</dbReference>
<dbReference type="PANTHER" id="PTHR12888">
    <property type="entry name" value="PEROXISOME ASSEMBLY PROTEIN 12 PEROXIN-12"/>
    <property type="match status" value="1"/>
</dbReference>
<dbReference type="Pfam" id="PF04757">
    <property type="entry name" value="Pex2_Pex12"/>
    <property type="match status" value="1"/>
</dbReference>
<dbReference type="PIRSF" id="PIRSF038074">
    <property type="entry name" value="Peroxisome_assembly_p12"/>
    <property type="match status" value="1"/>
</dbReference>
<dbReference type="SMART" id="SM00184">
    <property type="entry name" value="RING"/>
    <property type="match status" value="1"/>
</dbReference>
<dbReference type="SUPFAM" id="SSF57850">
    <property type="entry name" value="RING/U-box"/>
    <property type="match status" value="1"/>
</dbReference>
<gene>
    <name type="primary">prx-12</name>
    <name type="ORF">F08B12.2</name>
</gene>
<comment type="function">
    <text evidence="2 3">Component of a retrotranslocation channel required for peroxisome organization by mediating export of the PEX5/prx-5 receptor from peroxisomes to the cytosol, thereby promoting PEX5/prx-5 recycling (By similarity). The retrotranslocation channel is composed of PEX2/prx-2, PEX10/prx-10 and PEX12/prx-12; each subunit contributing transmembrane segments that coassemble into an open channel that specifically allows the passage of PEX5/prx-5 through the peroxisomal membrane (By similarity). PEX12/prx-12 also regulates PEX5/prx-5 recycling by activating the E3 ubiquitin-protein ligase activity of PEX10/prx-10 (By similarity). When PEX5 recycling is compromised, PEX12/prx-12 stimulates PEX10-mediated polyubiquitination of PEX5/prx-5, leading to its subsequent degradation (By similarity).</text>
</comment>
<comment type="pathway">
    <text evidence="2">Protein modification; protein ubiquitination.</text>
</comment>
<comment type="subunit">
    <text evidence="2">Component of the PEX2-PEX10-PEX12 retrotranslocation channel.</text>
</comment>
<comment type="subcellular location">
    <subcellularLocation>
        <location evidence="2">Peroxisome membrane</location>
        <topology evidence="4">Multi-pass membrane protein</topology>
    </subcellularLocation>
</comment>
<comment type="domain">
    <text evidence="1">The three subunits of the retrotranslocation channel (PEX2/prx-2, PEX10/prx-10 and PEX12/prx-12) coassemble in the membrane into a channel with an open 10 Angstrom pore. The RING-type zinc-fingers that catalyze PEX5/prx-5 receptor ubiquitination are positioned above the pore on the cytosolic side of the complex.</text>
</comment>
<comment type="domain">
    <text evidence="3">The RING-type zinc-finger is degenerated and only coordinates one zinc ions, preventing E3 ubiquitin-protein ligase activity.</text>
</comment>
<comment type="similarity">
    <text evidence="5">Belongs to the pex2/pex10/pex12 family.</text>
</comment>
<accession>Q19189</accession>
<reference key="1">
    <citation type="journal article" date="1998" name="Science">
        <title>Genome sequence of the nematode C. elegans: a platform for investigating biology.</title>
        <authorList>
            <consortium name="The C. elegans sequencing consortium"/>
        </authorList>
    </citation>
    <scope>NUCLEOTIDE SEQUENCE [LARGE SCALE GENOMIC DNA]</scope>
    <source>
        <strain>Bristol N2</strain>
    </source>
</reference>
<organism>
    <name type="scientific">Caenorhabditis elegans</name>
    <dbReference type="NCBI Taxonomy" id="6239"/>
    <lineage>
        <taxon>Eukaryota</taxon>
        <taxon>Metazoa</taxon>
        <taxon>Ecdysozoa</taxon>
        <taxon>Nematoda</taxon>
        <taxon>Chromadorea</taxon>
        <taxon>Rhabditida</taxon>
        <taxon>Rhabditina</taxon>
        <taxon>Rhabditomorpha</taxon>
        <taxon>Rhabditoidea</taxon>
        <taxon>Rhabditidae</taxon>
        <taxon>Peloderinae</taxon>
        <taxon>Caenorhabditis</taxon>
    </lineage>
</organism>
<evidence type="ECO:0000250" key="1">
    <source>
        <dbReference type="UniProtKB" id="G2Q5N0"/>
    </source>
</evidence>
<evidence type="ECO:0000250" key="2">
    <source>
        <dbReference type="UniProtKB" id="O00623"/>
    </source>
</evidence>
<evidence type="ECO:0000250" key="3">
    <source>
        <dbReference type="UniProtKB" id="Q04370"/>
    </source>
</evidence>
<evidence type="ECO:0000255" key="4"/>
<evidence type="ECO:0000305" key="5"/>
<name>PEX12_CAEEL</name>